<evidence type="ECO:0000305" key="1"/>
<feature type="chain" id="PRO_0000330395" description="HssA/B-like protein 25">
    <location>
        <begin position="1"/>
        <end position="96"/>
    </location>
</feature>
<accession>Q553K1</accession>
<reference key="1">
    <citation type="journal article" date="2002" name="Nature">
        <title>Sequence and analysis of chromosome 2 of Dictyostelium discoideum.</title>
        <authorList>
            <person name="Gloeckner G."/>
            <person name="Eichinger L."/>
            <person name="Szafranski K."/>
            <person name="Pachebat J.A."/>
            <person name="Bankier A.T."/>
            <person name="Dear P.H."/>
            <person name="Lehmann R."/>
            <person name="Baumgart C."/>
            <person name="Parra G."/>
            <person name="Abril J.F."/>
            <person name="Guigo R."/>
            <person name="Kumpf K."/>
            <person name="Tunggal B."/>
            <person name="Cox E.C."/>
            <person name="Quail M.A."/>
            <person name="Platzer M."/>
            <person name="Rosenthal A."/>
            <person name="Noegel A.A."/>
        </authorList>
    </citation>
    <scope>NUCLEOTIDE SEQUENCE [LARGE SCALE GENOMIC DNA]</scope>
    <source>
        <strain>AX4</strain>
    </source>
</reference>
<reference key="2">
    <citation type="journal article" date="2005" name="Nature">
        <title>The genome of the social amoeba Dictyostelium discoideum.</title>
        <authorList>
            <person name="Eichinger L."/>
            <person name="Pachebat J.A."/>
            <person name="Gloeckner G."/>
            <person name="Rajandream M.A."/>
            <person name="Sucgang R."/>
            <person name="Berriman M."/>
            <person name="Song J."/>
            <person name="Olsen R."/>
            <person name="Szafranski K."/>
            <person name="Xu Q."/>
            <person name="Tunggal B."/>
            <person name="Kummerfeld S."/>
            <person name="Madera M."/>
            <person name="Konfortov B.A."/>
            <person name="Rivero F."/>
            <person name="Bankier A.T."/>
            <person name="Lehmann R."/>
            <person name="Hamlin N."/>
            <person name="Davies R."/>
            <person name="Gaudet P."/>
            <person name="Fey P."/>
            <person name="Pilcher K."/>
            <person name="Chen G."/>
            <person name="Saunders D."/>
            <person name="Sodergren E.J."/>
            <person name="Davis P."/>
            <person name="Kerhornou A."/>
            <person name="Nie X."/>
            <person name="Hall N."/>
            <person name="Anjard C."/>
            <person name="Hemphill L."/>
            <person name="Bason N."/>
            <person name="Farbrother P."/>
            <person name="Desany B."/>
            <person name="Just E."/>
            <person name="Morio T."/>
            <person name="Rost R."/>
            <person name="Churcher C.M."/>
            <person name="Cooper J."/>
            <person name="Haydock S."/>
            <person name="van Driessche N."/>
            <person name="Cronin A."/>
            <person name="Goodhead I."/>
            <person name="Muzny D.M."/>
            <person name="Mourier T."/>
            <person name="Pain A."/>
            <person name="Lu M."/>
            <person name="Harper D."/>
            <person name="Lindsay R."/>
            <person name="Hauser H."/>
            <person name="James K.D."/>
            <person name="Quiles M."/>
            <person name="Madan Babu M."/>
            <person name="Saito T."/>
            <person name="Buchrieser C."/>
            <person name="Wardroper A."/>
            <person name="Felder M."/>
            <person name="Thangavelu M."/>
            <person name="Johnson D."/>
            <person name="Knights A."/>
            <person name="Loulseged H."/>
            <person name="Mungall K.L."/>
            <person name="Oliver K."/>
            <person name="Price C."/>
            <person name="Quail M.A."/>
            <person name="Urushihara H."/>
            <person name="Hernandez J."/>
            <person name="Rabbinowitsch E."/>
            <person name="Steffen D."/>
            <person name="Sanders M."/>
            <person name="Ma J."/>
            <person name="Kohara Y."/>
            <person name="Sharp S."/>
            <person name="Simmonds M.N."/>
            <person name="Spiegler S."/>
            <person name="Tivey A."/>
            <person name="Sugano S."/>
            <person name="White B."/>
            <person name="Walker D."/>
            <person name="Woodward J.R."/>
            <person name="Winckler T."/>
            <person name="Tanaka Y."/>
            <person name="Shaulsky G."/>
            <person name="Schleicher M."/>
            <person name="Weinstock G.M."/>
            <person name="Rosenthal A."/>
            <person name="Cox E.C."/>
            <person name="Chisholm R.L."/>
            <person name="Gibbs R.A."/>
            <person name="Loomis W.F."/>
            <person name="Platzer M."/>
            <person name="Kay R.R."/>
            <person name="Williams J.G."/>
            <person name="Dear P.H."/>
            <person name="Noegel A.A."/>
            <person name="Barrell B.G."/>
            <person name="Kuspa A."/>
        </authorList>
    </citation>
    <scope>NUCLEOTIDE SEQUENCE [LARGE SCALE GENOMIC DNA]</scope>
    <source>
        <strain>AX4</strain>
    </source>
</reference>
<organism>
    <name type="scientific">Dictyostelium discoideum</name>
    <name type="common">Social amoeba</name>
    <dbReference type="NCBI Taxonomy" id="44689"/>
    <lineage>
        <taxon>Eukaryota</taxon>
        <taxon>Amoebozoa</taxon>
        <taxon>Evosea</taxon>
        <taxon>Eumycetozoa</taxon>
        <taxon>Dictyostelia</taxon>
        <taxon>Dictyosteliales</taxon>
        <taxon>Dictyosteliaceae</taxon>
        <taxon>Dictyostelium</taxon>
    </lineage>
</organism>
<name>HSL25_DICDI</name>
<proteinExistence type="inferred from homology"/>
<dbReference type="EMBL" id="AAFI02000013">
    <property type="protein sequence ID" value="EAL69660.2"/>
    <property type="molecule type" value="Genomic_DNA"/>
</dbReference>
<dbReference type="RefSeq" id="XP_643412.2">
    <property type="nucleotide sequence ID" value="XM_638320.2"/>
</dbReference>
<dbReference type="PaxDb" id="44689-DDB0252809"/>
<dbReference type="EnsemblProtists" id="EAL69660">
    <property type="protein sequence ID" value="EAL69660"/>
    <property type="gene ID" value="DDB_G0275819"/>
</dbReference>
<dbReference type="GeneID" id="8619998"/>
<dbReference type="KEGG" id="ddi:DDB_G0275819"/>
<dbReference type="dictyBase" id="DDB_G0275819"/>
<dbReference type="VEuPathDB" id="AmoebaDB:DDB_G0275819"/>
<dbReference type="HOGENOM" id="CLU_2364042_0_0_1"/>
<dbReference type="InParanoid" id="Q553K1"/>
<dbReference type="PRO" id="PR:Q553K1"/>
<dbReference type="Proteomes" id="UP000002195">
    <property type="component" value="Chromosome 2"/>
</dbReference>
<dbReference type="GO" id="GO:0030587">
    <property type="term" value="P:sorocarp development"/>
    <property type="evidence" value="ECO:0000318"/>
    <property type="project" value="GO_Central"/>
</dbReference>
<dbReference type="InterPro" id="IPR050533">
    <property type="entry name" value="HssA/B-like_chaperone"/>
</dbReference>
<dbReference type="InterPro" id="IPR008455">
    <property type="entry name" value="HssA/B-related"/>
</dbReference>
<dbReference type="PANTHER" id="PTHR31059">
    <property type="entry name" value="HSSA/B-LIKE PROTEIN 1-RELATED-RELATED"/>
    <property type="match status" value="1"/>
</dbReference>
<dbReference type="PANTHER" id="PTHR31059:SF5">
    <property type="entry name" value="HSSA_B-LIKE PROTEIN 1-RELATED"/>
    <property type="match status" value="1"/>
</dbReference>
<dbReference type="Pfam" id="PF05710">
    <property type="entry name" value="Coiled"/>
    <property type="match status" value="1"/>
</dbReference>
<sequence length="96" mass="9000">MTIIASIITLSNPKQSTTGSVSTVSAAFKFGSNSVSCGGSSGSGSGLLGGNKGLLGLLGGLGGSPNSKVGVNIGGGMGPQTGSMMGGGQPNYCGCN</sequence>
<comment type="similarity">
    <text evidence="1">Belongs to the hssA/B family.</text>
</comment>
<protein>
    <recommendedName>
        <fullName>HssA/B-like protein 25</fullName>
    </recommendedName>
</protein>
<keyword id="KW-1185">Reference proteome</keyword>
<gene>
    <name type="primary">hssl25</name>
    <name type="ORF">DDB_G0275819</name>
</gene>